<comment type="function">
    <text evidence="1">Catalyzes the pyruvoyl-dependent decarboxylation of aspartate to produce beta-alanine.</text>
</comment>
<comment type="catalytic activity">
    <reaction evidence="1">
        <text>L-aspartate + H(+) = beta-alanine + CO2</text>
        <dbReference type="Rhea" id="RHEA:19497"/>
        <dbReference type="ChEBI" id="CHEBI:15378"/>
        <dbReference type="ChEBI" id="CHEBI:16526"/>
        <dbReference type="ChEBI" id="CHEBI:29991"/>
        <dbReference type="ChEBI" id="CHEBI:57966"/>
        <dbReference type="EC" id="4.1.1.11"/>
    </reaction>
</comment>
<comment type="cofactor">
    <cofactor evidence="1">
        <name>pyruvate</name>
        <dbReference type="ChEBI" id="CHEBI:15361"/>
    </cofactor>
    <text evidence="1">Binds 1 pyruvoyl group covalently per subunit.</text>
</comment>
<comment type="pathway">
    <text evidence="1">Cofactor biosynthesis; (R)-pantothenate biosynthesis; beta-alanine from L-aspartate: step 1/1.</text>
</comment>
<comment type="subunit">
    <text evidence="1">Heterooctamer of four alpha and four beta subunits.</text>
</comment>
<comment type="subcellular location">
    <subcellularLocation>
        <location evidence="1">Cytoplasm</location>
    </subcellularLocation>
</comment>
<comment type="PTM">
    <text evidence="1">Is synthesized initially as an inactive proenzyme, which is activated by self-cleavage at a specific serine bond to produce a beta-subunit with a hydroxyl group at its C-terminus and an alpha-subunit with a pyruvoyl group at its N-terminus.</text>
</comment>
<comment type="similarity">
    <text evidence="1">Belongs to the PanD family.</text>
</comment>
<accession>A9MPM3</accession>
<reference key="1">
    <citation type="submission" date="2007-11" db="EMBL/GenBank/DDBJ databases">
        <authorList>
            <consortium name="The Salmonella enterica serovar Arizonae Genome Sequencing Project"/>
            <person name="McClelland M."/>
            <person name="Sanderson E.K."/>
            <person name="Porwollik S."/>
            <person name="Spieth J."/>
            <person name="Clifton W.S."/>
            <person name="Fulton R."/>
            <person name="Chunyan W."/>
            <person name="Wollam A."/>
            <person name="Shah N."/>
            <person name="Pepin K."/>
            <person name="Bhonagiri V."/>
            <person name="Nash W."/>
            <person name="Johnson M."/>
            <person name="Thiruvilangam P."/>
            <person name="Wilson R."/>
        </authorList>
    </citation>
    <scope>NUCLEOTIDE SEQUENCE [LARGE SCALE GENOMIC DNA]</scope>
    <source>
        <strain>ATCC BAA-731 / CDC346-86 / RSK2980</strain>
    </source>
</reference>
<name>PAND_SALAR</name>
<proteinExistence type="inferred from homology"/>
<feature type="chain" id="PRO_1000080938" description="Aspartate 1-decarboxylase beta chain" evidence="1">
    <location>
        <begin position="1"/>
        <end position="24"/>
    </location>
</feature>
<feature type="chain" id="PRO_1000080939" description="Aspartate 1-decarboxylase alpha chain" evidence="1">
    <location>
        <begin position="25"/>
        <end position="126"/>
    </location>
</feature>
<feature type="active site" description="Schiff-base intermediate with substrate; via pyruvic acid" evidence="1">
    <location>
        <position position="25"/>
    </location>
</feature>
<feature type="active site" description="Proton donor" evidence="1">
    <location>
        <position position="58"/>
    </location>
</feature>
<feature type="binding site" evidence="1">
    <location>
        <position position="57"/>
    </location>
    <ligand>
        <name>substrate</name>
    </ligand>
</feature>
<feature type="binding site" evidence="1">
    <location>
        <begin position="73"/>
        <end position="75"/>
    </location>
    <ligand>
        <name>substrate</name>
    </ligand>
</feature>
<feature type="modified residue" description="Pyruvic acid (Ser)" evidence="1">
    <location>
        <position position="25"/>
    </location>
</feature>
<dbReference type="EC" id="4.1.1.11" evidence="1"/>
<dbReference type="EMBL" id="CP000880">
    <property type="protein sequence ID" value="ABX22666.1"/>
    <property type="molecule type" value="Genomic_DNA"/>
</dbReference>
<dbReference type="SMR" id="A9MPM3"/>
<dbReference type="STRING" id="41514.SARI_02818"/>
<dbReference type="KEGG" id="ses:SARI_02818"/>
<dbReference type="HOGENOM" id="CLU_115305_2_1_6"/>
<dbReference type="UniPathway" id="UPA00028">
    <property type="reaction ID" value="UER00002"/>
</dbReference>
<dbReference type="Proteomes" id="UP000002084">
    <property type="component" value="Chromosome"/>
</dbReference>
<dbReference type="GO" id="GO:0005829">
    <property type="term" value="C:cytosol"/>
    <property type="evidence" value="ECO:0007669"/>
    <property type="project" value="TreeGrafter"/>
</dbReference>
<dbReference type="GO" id="GO:0004068">
    <property type="term" value="F:aspartate 1-decarboxylase activity"/>
    <property type="evidence" value="ECO:0007669"/>
    <property type="project" value="UniProtKB-UniRule"/>
</dbReference>
<dbReference type="GO" id="GO:0006523">
    <property type="term" value="P:alanine biosynthetic process"/>
    <property type="evidence" value="ECO:0007669"/>
    <property type="project" value="InterPro"/>
</dbReference>
<dbReference type="GO" id="GO:0015940">
    <property type="term" value="P:pantothenate biosynthetic process"/>
    <property type="evidence" value="ECO:0007669"/>
    <property type="project" value="UniProtKB-UniRule"/>
</dbReference>
<dbReference type="CDD" id="cd06919">
    <property type="entry name" value="Asp_decarbox"/>
    <property type="match status" value="1"/>
</dbReference>
<dbReference type="FunFam" id="2.40.40.20:FF:000004">
    <property type="entry name" value="Aspartate 1-decarboxylase"/>
    <property type="match status" value="1"/>
</dbReference>
<dbReference type="Gene3D" id="2.40.40.20">
    <property type="match status" value="1"/>
</dbReference>
<dbReference type="HAMAP" id="MF_00446">
    <property type="entry name" value="PanD"/>
    <property type="match status" value="1"/>
</dbReference>
<dbReference type="InterPro" id="IPR009010">
    <property type="entry name" value="Asp_de-COase-like_dom_sf"/>
</dbReference>
<dbReference type="InterPro" id="IPR003190">
    <property type="entry name" value="Asp_decarbox"/>
</dbReference>
<dbReference type="NCBIfam" id="TIGR00223">
    <property type="entry name" value="panD"/>
    <property type="match status" value="1"/>
</dbReference>
<dbReference type="PANTHER" id="PTHR21012">
    <property type="entry name" value="ASPARTATE 1-DECARBOXYLASE"/>
    <property type="match status" value="1"/>
</dbReference>
<dbReference type="PANTHER" id="PTHR21012:SF0">
    <property type="entry name" value="ASPARTATE 1-DECARBOXYLASE"/>
    <property type="match status" value="1"/>
</dbReference>
<dbReference type="Pfam" id="PF02261">
    <property type="entry name" value="Asp_decarbox"/>
    <property type="match status" value="1"/>
</dbReference>
<dbReference type="PIRSF" id="PIRSF006246">
    <property type="entry name" value="Asp_decarbox"/>
    <property type="match status" value="1"/>
</dbReference>
<dbReference type="SUPFAM" id="SSF50692">
    <property type="entry name" value="ADC-like"/>
    <property type="match status" value="1"/>
</dbReference>
<gene>
    <name evidence="1" type="primary">panD</name>
    <name type="ordered locus">SARI_02818</name>
</gene>
<sequence>MIRTMLQGKLHRVKVTQADLHYEGSCAIDQDFLDAAGILENEAIDIWNVSNGKRFSTYAIAAERGSKIISVNGAAAHCASVGDIVIIASFVTMSDEEARTWHPNVAYFEGDNEMKRTAKAIPVQVA</sequence>
<protein>
    <recommendedName>
        <fullName evidence="1">Aspartate 1-decarboxylase</fullName>
        <ecNumber evidence="1">4.1.1.11</ecNumber>
    </recommendedName>
    <alternativeName>
        <fullName evidence="1">Aspartate alpha-decarboxylase</fullName>
    </alternativeName>
    <component>
        <recommendedName>
            <fullName evidence="1">Aspartate 1-decarboxylase beta chain</fullName>
        </recommendedName>
    </component>
    <component>
        <recommendedName>
            <fullName evidence="1">Aspartate 1-decarboxylase alpha chain</fullName>
        </recommendedName>
    </component>
</protein>
<organism>
    <name type="scientific">Salmonella arizonae (strain ATCC BAA-731 / CDC346-86 / RSK2980)</name>
    <dbReference type="NCBI Taxonomy" id="41514"/>
    <lineage>
        <taxon>Bacteria</taxon>
        <taxon>Pseudomonadati</taxon>
        <taxon>Pseudomonadota</taxon>
        <taxon>Gammaproteobacteria</taxon>
        <taxon>Enterobacterales</taxon>
        <taxon>Enterobacteriaceae</taxon>
        <taxon>Salmonella</taxon>
    </lineage>
</organism>
<evidence type="ECO:0000255" key="1">
    <source>
        <dbReference type="HAMAP-Rule" id="MF_00446"/>
    </source>
</evidence>
<keyword id="KW-0068">Autocatalytic cleavage</keyword>
<keyword id="KW-0963">Cytoplasm</keyword>
<keyword id="KW-0210">Decarboxylase</keyword>
<keyword id="KW-0456">Lyase</keyword>
<keyword id="KW-0566">Pantothenate biosynthesis</keyword>
<keyword id="KW-0670">Pyruvate</keyword>
<keyword id="KW-1185">Reference proteome</keyword>
<keyword id="KW-0704">Schiff base</keyword>
<keyword id="KW-0865">Zymogen</keyword>